<protein>
    <recommendedName>
        <fullName>NAD(P)H-quinone oxidoreductase subunit 5, chloroplastic</fullName>
        <ecNumber>7.1.1.-</ecNumber>
    </recommendedName>
    <alternativeName>
        <fullName>NAD(P)H dehydrogenase subunit 5</fullName>
    </alternativeName>
    <alternativeName>
        <fullName>NADH-plastoquinone oxidoreductase subunit 5</fullName>
    </alternativeName>
</protein>
<name>NU5C_MALAR</name>
<proteinExistence type="inferred from homology"/>
<comment type="function">
    <text evidence="1">NDH shuttles electrons from NAD(P)H:plastoquinone, via FMN and iron-sulfur (Fe-S) centers, to quinones in the photosynthetic chain and possibly in a chloroplast respiratory chain. The immediate electron acceptor for the enzyme in this species is believed to be plastoquinone. Couples the redox reaction to proton translocation, and thus conserves the redox energy in a proton gradient (By similarity).</text>
</comment>
<comment type="catalytic activity">
    <reaction>
        <text>a plastoquinone + NADH + (n+1) H(+)(in) = a plastoquinol + NAD(+) + n H(+)(out)</text>
        <dbReference type="Rhea" id="RHEA:42608"/>
        <dbReference type="Rhea" id="RHEA-COMP:9561"/>
        <dbReference type="Rhea" id="RHEA-COMP:9562"/>
        <dbReference type="ChEBI" id="CHEBI:15378"/>
        <dbReference type="ChEBI" id="CHEBI:17757"/>
        <dbReference type="ChEBI" id="CHEBI:57540"/>
        <dbReference type="ChEBI" id="CHEBI:57945"/>
        <dbReference type="ChEBI" id="CHEBI:62192"/>
    </reaction>
</comment>
<comment type="catalytic activity">
    <reaction>
        <text>a plastoquinone + NADPH + (n+1) H(+)(in) = a plastoquinol + NADP(+) + n H(+)(out)</text>
        <dbReference type="Rhea" id="RHEA:42612"/>
        <dbReference type="Rhea" id="RHEA-COMP:9561"/>
        <dbReference type="Rhea" id="RHEA-COMP:9562"/>
        <dbReference type="ChEBI" id="CHEBI:15378"/>
        <dbReference type="ChEBI" id="CHEBI:17757"/>
        <dbReference type="ChEBI" id="CHEBI:57783"/>
        <dbReference type="ChEBI" id="CHEBI:58349"/>
        <dbReference type="ChEBI" id="CHEBI:62192"/>
    </reaction>
</comment>
<comment type="subunit">
    <text evidence="1">NDH is composed of at least 16 different subunits, 5 of which are encoded in the nucleus.</text>
</comment>
<comment type="subcellular location">
    <subcellularLocation>
        <location evidence="1">Plastid</location>
        <location evidence="1">Chloroplast thylakoid membrane</location>
        <topology evidence="1">Multi-pass membrane protein</topology>
    </subcellularLocation>
</comment>
<comment type="similarity">
    <text evidence="3">Belongs to the complex I subunit 5 family.</text>
</comment>
<reference key="1">
    <citation type="journal article" date="1999" name="Am. J. Bot.">
        <title>Phylogeny of the core Malvales: evidence from ndhF sequence data.</title>
        <authorList>
            <person name="Alverson W.S."/>
            <person name="Whitlock B.A."/>
            <person name="Nyffeler R."/>
            <person name="Bayer C."/>
            <person name="Baum D.A."/>
        </authorList>
    </citation>
    <scope>NUCLEOTIDE SEQUENCE [GENOMIC DNA]</scope>
</reference>
<geneLocation type="chloroplast"/>
<organism>
    <name type="scientific">Malvaviscus arboreus</name>
    <name type="common">Turk's cap</name>
    <name type="synonym">Hibiscus malvaviscus</name>
    <dbReference type="NCBI Taxonomy" id="93788"/>
    <lineage>
        <taxon>Eukaryota</taxon>
        <taxon>Viridiplantae</taxon>
        <taxon>Streptophyta</taxon>
        <taxon>Embryophyta</taxon>
        <taxon>Tracheophyta</taxon>
        <taxon>Spermatophyta</taxon>
        <taxon>Magnoliopsida</taxon>
        <taxon>eudicotyledons</taxon>
        <taxon>Gunneridae</taxon>
        <taxon>Pentapetalae</taxon>
        <taxon>rosids</taxon>
        <taxon>malvids</taxon>
        <taxon>Malvales</taxon>
        <taxon>Malvaceae</taxon>
        <taxon>Malvoideae</taxon>
        <taxon>Malvaviscus</taxon>
    </lineage>
</organism>
<evidence type="ECO:0000250" key="1"/>
<evidence type="ECO:0000255" key="2"/>
<evidence type="ECO:0000305" key="3"/>
<gene>
    <name type="primary">ndhF</name>
</gene>
<dbReference type="EC" id="7.1.1.-"/>
<dbReference type="EMBL" id="AF111718">
    <property type="protein sequence ID" value="AAF27198.1"/>
    <property type="molecule type" value="Genomic_DNA"/>
</dbReference>
<dbReference type="GO" id="GO:0009535">
    <property type="term" value="C:chloroplast thylakoid membrane"/>
    <property type="evidence" value="ECO:0007669"/>
    <property type="project" value="UniProtKB-SubCell"/>
</dbReference>
<dbReference type="GO" id="GO:0008137">
    <property type="term" value="F:NADH dehydrogenase (ubiquinone) activity"/>
    <property type="evidence" value="ECO:0007669"/>
    <property type="project" value="InterPro"/>
</dbReference>
<dbReference type="GO" id="GO:0048038">
    <property type="term" value="F:quinone binding"/>
    <property type="evidence" value="ECO:0007669"/>
    <property type="project" value="UniProtKB-KW"/>
</dbReference>
<dbReference type="GO" id="GO:0042773">
    <property type="term" value="P:ATP synthesis coupled electron transport"/>
    <property type="evidence" value="ECO:0007669"/>
    <property type="project" value="InterPro"/>
</dbReference>
<dbReference type="GO" id="GO:0015990">
    <property type="term" value="P:electron transport coupled proton transport"/>
    <property type="evidence" value="ECO:0007669"/>
    <property type="project" value="TreeGrafter"/>
</dbReference>
<dbReference type="Gene3D" id="1.20.5.2700">
    <property type="match status" value="1"/>
</dbReference>
<dbReference type="InterPro" id="IPR002128">
    <property type="entry name" value="NADH_UbQ_OxRdtase_chlpt_su5_C"/>
</dbReference>
<dbReference type="InterPro" id="IPR018393">
    <property type="entry name" value="NADHpl_OxRdtase_5_subgr"/>
</dbReference>
<dbReference type="InterPro" id="IPR001750">
    <property type="entry name" value="ND/Mrp_TM"/>
</dbReference>
<dbReference type="InterPro" id="IPR003945">
    <property type="entry name" value="NU5C-like"/>
</dbReference>
<dbReference type="InterPro" id="IPR001516">
    <property type="entry name" value="Proton_antipo_N"/>
</dbReference>
<dbReference type="NCBIfam" id="TIGR01974">
    <property type="entry name" value="NDH_I_L"/>
    <property type="match status" value="1"/>
</dbReference>
<dbReference type="NCBIfam" id="NF005141">
    <property type="entry name" value="PRK06590.1"/>
    <property type="match status" value="1"/>
</dbReference>
<dbReference type="PANTHER" id="PTHR42829">
    <property type="entry name" value="NADH-UBIQUINONE OXIDOREDUCTASE CHAIN 5"/>
    <property type="match status" value="1"/>
</dbReference>
<dbReference type="PANTHER" id="PTHR42829:SF2">
    <property type="entry name" value="NADH-UBIQUINONE OXIDOREDUCTASE CHAIN 5"/>
    <property type="match status" value="1"/>
</dbReference>
<dbReference type="Pfam" id="PF01010">
    <property type="entry name" value="Proton_antipo_C"/>
    <property type="match status" value="1"/>
</dbReference>
<dbReference type="Pfam" id="PF00361">
    <property type="entry name" value="Proton_antipo_M"/>
    <property type="match status" value="1"/>
</dbReference>
<dbReference type="Pfam" id="PF00662">
    <property type="entry name" value="Proton_antipo_N"/>
    <property type="match status" value="1"/>
</dbReference>
<dbReference type="PRINTS" id="PR01434">
    <property type="entry name" value="NADHDHGNASE5"/>
</dbReference>
<dbReference type="PRINTS" id="PR01435">
    <property type="entry name" value="NPOXDRDTASE5"/>
</dbReference>
<feature type="chain" id="PRO_0000118192" description="NAD(P)H-quinone oxidoreductase subunit 5, chloroplastic">
    <location>
        <begin position="1"/>
        <end position="707" status="greater than"/>
    </location>
</feature>
<feature type="transmembrane region" description="Helical" evidence="2">
    <location>
        <begin position="9"/>
        <end position="29"/>
    </location>
</feature>
<feature type="transmembrane region" description="Helical" evidence="2">
    <location>
        <begin position="40"/>
        <end position="60"/>
    </location>
</feature>
<feature type="transmembrane region" description="Helical" evidence="2">
    <location>
        <begin position="89"/>
        <end position="109"/>
    </location>
</feature>
<feature type="transmembrane region" description="Helical" evidence="2">
    <location>
        <begin position="125"/>
        <end position="145"/>
    </location>
</feature>
<feature type="transmembrane region" description="Helical" evidence="2">
    <location>
        <begin position="147"/>
        <end position="167"/>
    </location>
</feature>
<feature type="transmembrane region" description="Helical" evidence="2">
    <location>
        <begin position="184"/>
        <end position="204"/>
    </location>
</feature>
<feature type="transmembrane region" description="Helical" evidence="2">
    <location>
        <begin position="219"/>
        <end position="239"/>
    </location>
</feature>
<feature type="transmembrane region" description="Helical" evidence="2">
    <location>
        <begin position="258"/>
        <end position="278"/>
    </location>
</feature>
<feature type="transmembrane region" description="Helical" evidence="2">
    <location>
        <begin position="280"/>
        <end position="300"/>
    </location>
</feature>
<feature type="transmembrane region" description="Helical" evidence="2">
    <location>
        <begin position="327"/>
        <end position="347"/>
    </location>
</feature>
<feature type="transmembrane region" description="Helical" evidence="2">
    <location>
        <begin position="354"/>
        <end position="374"/>
    </location>
</feature>
<feature type="transmembrane region" description="Helical" evidence="2">
    <location>
        <begin position="396"/>
        <end position="416"/>
    </location>
</feature>
<feature type="transmembrane region" description="Helical" evidence="2">
    <location>
        <begin position="425"/>
        <end position="445"/>
    </location>
</feature>
<feature type="transmembrane region" description="Helical" evidence="2">
    <location>
        <begin position="538"/>
        <end position="558"/>
    </location>
</feature>
<feature type="transmembrane region" description="Helical" evidence="2">
    <location>
        <begin position="592"/>
        <end position="612"/>
    </location>
</feature>
<feature type="non-terminal residue">
    <location>
        <position position="707"/>
    </location>
</feature>
<sequence length="707" mass="79857">MEHAYQYSWIIPFVPLPIPILIGIGLLLFPTATKNLRRMWAFPNILLLSIVMIFSIDLSIQQINGSYIYQYVWSWTINNDFSFEFGYFIDSLTSIMSILITTVGIFVLIYSDNYMSHDQGYLRFFAYMSLFNTSMLGLVTSSNLIQIYIFWELVGMCSYLLIGFWFTRPAAANACQKAFVTNRIGDFGLLLGILGFYWITGSFEFQXLFEIFNNLIYNNEVHLLFVTLCASLLFAGAVAKSAQFPLHVWLPDAMXGPTPISALIHAATMVATGIFLVARLLPLFIVIPYIMNLISLIGIITVLLGATLPLAQKXIKRGLAYSTMSQLGYMMLALGMGSYRAALFHLITHAYSKALLFLGSGSIIHSMEAVVGYSPEKSQNMVLMGGLRKHAPITQIAFLIGTLSLCGIPPLACFWSKDEILSDSWLYSPIFAIIAWSTAGLTAFYMFRIYLLTFEGHLNIYFQKYSGKKSSSFYSIKLWGKEEQKMINRNFRLFPLLTMNKNEKPYTIGGNVKKRALITNFGYKEAFSYPHESDNTMLFPMLILVLFTLFVGAIAIPLNQEGMHLDILSKLXXPSINXLHKNSNDFEDSYQFLTNATFSVSIAGFGIFTAFLLYKPFYSSLLNLNLLNSFSKKGPKRIFLDKIIYLIYDWSYXRGYIDTFYSISLTKGIRGLAELTHFFDRRVIDGITNGVGITSFFVGEGIKYXGG</sequence>
<accession>Q9MVL6</accession>
<keyword id="KW-0150">Chloroplast</keyword>
<keyword id="KW-0472">Membrane</keyword>
<keyword id="KW-0520">NAD</keyword>
<keyword id="KW-0521">NADP</keyword>
<keyword id="KW-0934">Plastid</keyword>
<keyword id="KW-0618">Plastoquinone</keyword>
<keyword id="KW-0874">Quinone</keyword>
<keyword id="KW-0793">Thylakoid</keyword>
<keyword id="KW-1278">Translocase</keyword>
<keyword id="KW-0812">Transmembrane</keyword>
<keyword id="KW-1133">Transmembrane helix</keyword>
<keyword id="KW-0813">Transport</keyword>